<feature type="chain" id="PRO_0000306763" description="Small ribosomal subunit protein uS13">
    <location>
        <begin position="1"/>
        <end position="152"/>
    </location>
</feature>
<gene>
    <name evidence="1" type="primary">rps13</name>
    <name type="ordered locus">Pars_1894</name>
</gene>
<accession>A4WM28</accession>
<proteinExistence type="inferred from homology"/>
<comment type="function">
    <text evidence="1">Located at the top of the head of the 30S subunit, it contacts several helices of the 16S rRNA. In the 70S ribosome it contacts the 23S rRNA (bridge B1a) and protein L5 of the 50S subunit (bridge B1b), connecting the 2 subunits; these bridges are implicated in subunit movement.</text>
</comment>
<comment type="subunit">
    <text evidence="1">Part of the 30S ribosomal subunit. Forms a loose heterodimer with protein S19. Forms two bridges to the 50S subunit in the 70S ribosome.</text>
</comment>
<comment type="similarity">
    <text evidence="1">Belongs to the universal ribosomal protein uS13 family.</text>
</comment>
<evidence type="ECO:0000255" key="1">
    <source>
        <dbReference type="HAMAP-Rule" id="MF_01315"/>
    </source>
</evidence>
<evidence type="ECO:0000305" key="2"/>
<reference key="1">
    <citation type="submission" date="2007-04" db="EMBL/GenBank/DDBJ databases">
        <title>Complete sequence of Pyrobaculum arsenaticum DSM 13514.</title>
        <authorList>
            <consortium name="US DOE Joint Genome Institute"/>
            <person name="Copeland A."/>
            <person name="Lucas S."/>
            <person name="Lapidus A."/>
            <person name="Barry K."/>
            <person name="Glavina del Rio T."/>
            <person name="Dalin E."/>
            <person name="Tice H."/>
            <person name="Pitluck S."/>
            <person name="Chain P."/>
            <person name="Malfatti S."/>
            <person name="Shin M."/>
            <person name="Vergez L."/>
            <person name="Schmutz J."/>
            <person name="Larimer F."/>
            <person name="Land M."/>
            <person name="Hauser L."/>
            <person name="Kyrpides N."/>
            <person name="Mikhailova N."/>
            <person name="Cozen A.E."/>
            <person name="Fitz-Gibbon S.T."/>
            <person name="House C.H."/>
            <person name="Saltikov C."/>
            <person name="Lowe T.M."/>
            <person name="Richardson P."/>
        </authorList>
    </citation>
    <scope>NUCLEOTIDE SEQUENCE [LARGE SCALE GENOMIC DNA]</scope>
    <source>
        <strain>ATCC 700994 / DSM 13514 / JCM 11321 / PZ6</strain>
    </source>
</reference>
<dbReference type="EMBL" id="CP000660">
    <property type="protein sequence ID" value="ABP51445.1"/>
    <property type="molecule type" value="Genomic_DNA"/>
</dbReference>
<dbReference type="SMR" id="A4WM28"/>
<dbReference type="STRING" id="340102.Pars_1894"/>
<dbReference type="KEGG" id="pas:Pars_1894"/>
<dbReference type="HOGENOM" id="CLU_103849_0_0_2"/>
<dbReference type="OrthoDB" id="372127at2157"/>
<dbReference type="PhylomeDB" id="A4WM28"/>
<dbReference type="Proteomes" id="UP000001567">
    <property type="component" value="Chromosome"/>
</dbReference>
<dbReference type="GO" id="GO:0005829">
    <property type="term" value="C:cytosol"/>
    <property type="evidence" value="ECO:0007669"/>
    <property type="project" value="TreeGrafter"/>
</dbReference>
<dbReference type="GO" id="GO:0015935">
    <property type="term" value="C:small ribosomal subunit"/>
    <property type="evidence" value="ECO:0007669"/>
    <property type="project" value="TreeGrafter"/>
</dbReference>
<dbReference type="GO" id="GO:0019843">
    <property type="term" value="F:rRNA binding"/>
    <property type="evidence" value="ECO:0007669"/>
    <property type="project" value="UniProtKB-UniRule"/>
</dbReference>
<dbReference type="GO" id="GO:0003735">
    <property type="term" value="F:structural constituent of ribosome"/>
    <property type="evidence" value="ECO:0007669"/>
    <property type="project" value="InterPro"/>
</dbReference>
<dbReference type="GO" id="GO:0006412">
    <property type="term" value="P:translation"/>
    <property type="evidence" value="ECO:0007669"/>
    <property type="project" value="UniProtKB-UniRule"/>
</dbReference>
<dbReference type="FunFam" id="1.10.8.50:FF:000001">
    <property type="entry name" value="30S ribosomal protein S13"/>
    <property type="match status" value="1"/>
</dbReference>
<dbReference type="Gene3D" id="1.10.8.50">
    <property type="match status" value="1"/>
</dbReference>
<dbReference type="Gene3D" id="4.10.910.10">
    <property type="entry name" value="30s ribosomal protein s13, domain 2"/>
    <property type="match status" value="1"/>
</dbReference>
<dbReference type="HAMAP" id="MF_01315">
    <property type="entry name" value="Ribosomal_uS13"/>
    <property type="match status" value="1"/>
</dbReference>
<dbReference type="InterPro" id="IPR027437">
    <property type="entry name" value="Rbsml_uS13_C"/>
</dbReference>
<dbReference type="InterPro" id="IPR001892">
    <property type="entry name" value="Ribosomal_uS13"/>
</dbReference>
<dbReference type="InterPro" id="IPR010979">
    <property type="entry name" value="Ribosomal_uS13-like_H2TH"/>
</dbReference>
<dbReference type="InterPro" id="IPR019977">
    <property type="entry name" value="Ribosomal_uS13_archaeal"/>
</dbReference>
<dbReference type="InterPro" id="IPR018269">
    <property type="entry name" value="Ribosomal_uS13_CS"/>
</dbReference>
<dbReference type="NCBIfam" id="NF003140">
    <property type="entry name" value="PRK04053.1"/>
    <property type="match status" value="1"/>
</dbReference>
<dbReference type="NCBIfam" id="TIGR03629">
    <property type="entry name" value="uS13_arch"/>
    <property type="match status" value="1"/>
</dbReference>
<dbReference type="PANTHER" id="PTHR10871">
    <property type="entry name" value="30S RIBOSOMAL PROTEIN S13/40S RIBOSOMAL PROTEIN S18"/>
    <property type="match status" value="1"/>
</dbReference>
<dbReference type="PANTHER" id="PTHR10871:SF3">
    <property type="entry name" value="SMALL RIBOSOMAL SUBUNIT PROTEIN US13"/>
    <property type="match status" value="1"/>
</dbReference>
<dbReference type="Pfam" id="PF00416">
    <property type="entry name" value="Ribosomal_S13"/>
    <property type="match status" value="1"/>
</dbReference>
<dbReference type="PIRSF" id="PIRSF002134">
    <property type="entry name" value="Ribosomal_S13"/>
    <property type="match status" value="1"/>
</dbReference>
<dbReference type="SUPFAM" id="SSF46946">
    <property type="entry name" value="S13-like H2TH domain"/>
    <property type="match status" value="1"/>
</dbReference>
<dbReference type="PROSITE" id="PS00646">
    <property type="entry name" value="RIBOSOMAL_S13_1"/>
    <property type="match status" value="1"/>
</dbReference>
<dbReference type="PROSITE" id="PS50159">
    <property type="entry name" value="RIBOSOMAL_S13_2"/>
    <property type="match status" value="1"/>
</dbReference>
<name>RS13_PYRAR</name>
<protein>
    <recommendedName>
        <fullName evidence="1">Small ribosomal subunit protein uS13</fullName>
    </recommendedName>
    <alternativeName>
        <fullName evidence="2">30S ribosomal protein S13</fullName>
    </alternativeName>
</protein>
<sequence>MSQELRAIVRVGDTDLEGNKQVAYALAKIRGIGIASAYAICWKLGIDPHAVLGALPEEQINKLDWAVRNLHEVAPAWFLNRRKDPETGRDMHLIGSELVLAAKRDVDLMKKLKSWKGIRHSLGLKVRGQRTVTTGRLGAVAGVTKKKATPGK</sequence>
<organism>
    <name type="scientific">Pyrobaculum arsenaticum (strain DSM 13514 / JCM 11321 / PZ6)</name>
    <dbReference type="NCBI Taxonomy" id="340102"/>
    <lineage>
        <taxon>Archaea</taxon>
        <taxon>Thermoproteota</taxon>
        <taxon>Thermoprotei</taxon>
        <taxon>Thermoproteales</taxon>
        <taxon>Thermoproteaceae</taxon>
        <taxon>Pyrobaculum</taxon>
    </lineage>
</organism>
<keyword id="KW-0687">Ribonucleoprotein</keyword>
<keyword id="KW-0689">Ribosomal protein</keyword>
<keyword id="KW-0694">RNA-binding</keyword>
<keyword id="KW-0699">rRNA-binding</keyword>